<proteinExistence type="inferred from homology"/>
<gene>
    <name type="ordered locus">A2cp1_4106</name>
</gene>
<protein>
    <recommendedName>
        <fullName evidence="1">UPF0301 protein A2cp1_4106</fullName>
    </recommendedName>
</protein>
<feature type="chain" id="PRO_1000148376" description="UPF0301 protein A2cp1_4106">
    <location>
        <begin position="1"/>
        <end position="197"/>
    </location>
</feature>
<comment type="similarity">
    <text evidence="1">Belongs to the UPF0301 (AlgH) family.</text>
</comment>
<dbReference type="EMBL" id="CP001359">
    <property type="protein sequence ID" value="ACL67424.1"/>
    <property type="molecule type" value="Genomic_DNA"/>
</dbReference>
<dbReference type="RefSeq" id="WP_015935144.1">
    <property type="nucleotide sequence ID" value="NC_011891.1"/>
</dbReference>
<dbReference type="SMR" id="B8J9N6"/>
<dbReference type="KEGG" id="acp:A2cp1_4106"/>
<dbReference type="HOGENOM" id="CLU_057596_1_0_7"/>
<dbReference type="Proteomes" id="UP000007089">
    <property type="component" value="Chromosome"/>
</dbReference>
<dbReference type="GO" id="GO:0005829">
    <property type="term" value="C:cytosol"/>
    <property type="evidence" value="ECO:0007669"/>
    <property type="project" value="TreeGrafter"/>
</dbReference>
<dbReference type="Gene3D" id="3.40.1740.10">
    <property type="entry name" value="VC0467-like"/>
    <property type="match status" value="1"/>
</dbReference>
<dbReference type="HAMAP" id="MF_00758">
    <property type="entry name" value="UPF0301"/>
    <property type="match status" value="1"/>
</dbReference>
<dbReference type="InterPro" id="IPR003774">
    <property type="entry name" value="AlgH-like"/>
</dbReference>
<dbReference type="PANTHER" id="PTHR30327">
    <property type="entry name" value="UNCHARACTERIZED PROTEIN YQGE"/>
    <property type="match status" value="1"/>
</dbReference>
<dbReference type="PANTHER" id="PTHR30327:SF1">
    <property type="entry name" value="UPF0301 PROTEIN YQGE"/>
    <property type="match status" value="1"/>
</dbReference>
<dbReference type="Pfam" id="PF02622">
    <property type="entry name" value="DUF179"/>
    <property type="match status" value="1"/>
</dbReference>
<dbReference type="SUPFAM" id="SSF143456">
    <property type="entry name" value="VC0467-like"/>
    <property type="match status" value="1"/>
</dbReference>
<organism>
    <name type="scientific">Anaeromyxobacter dehalogenans (strain 2CP-1 / ATCC BAA-258)</name>
    <dbReference type="NCBI Taxonomy" id="455488"/>
    <lineage>
        <taxon>Bacteria</taxon>
        <taxon>Pseudomonadati</taxon>
        <taxon>Myxococcota</taxon>
        <taxon>Myxococcia</taxon>
        <taxon>Myxococcales</taxon>
        <taxon>Cystobacterineae</taxon>
        <taxon>Anaeromyxobacteraceae</taxon>
        <taxon>Anaeromyxobacter</taxon>
    </lineage>
</organism>
<evidence type="ECO:0000255" key="1">
    <source>
        <dbReference type="HAMAP-Rule" id="MF_00758"/>
    </source>
</evidence>
<reference key="1">
    <citation type="submission" date="2009-01" db="EMBL/GenBank/DDBJ databases">
        <title>Complete sequence of Anaeromyxobacter dehalogenans 2CP-1.</title>
        <authorList>
            <person name="Lucas S."/>
            <person name="Copeland A."/>
            <person name="Lapidus A."/>
            <person name="Glavina del Rio T."/>
            <person name="Dalin E."/>
            <person name="Tice H."/>
            <person name="Bruce D."/>
            <person name="Goodwin L."/>
            <person name="Pitluck S."/>
            <person name="Saunders E."/>
            <person name="Brettin T."/>
            <person name="Detter J.C."/>
            <person name="Han C."/>
            <person name="Larimer F."/>
            <person name="Land M."/>
            <person name="Hauser L."/>
            <person name="Kyrpides N."/>
            <person name="Ovchinnikova G."/>
            <person name="Beliaev A.S."/>
            <person name="Richardson P."/>
        </authorList>
    </citation>
    <scope>NUCLEOTIDE SEQUENCE [LARGE SCALE GENOMIC DNA]</scope>
    <source>
        <strain>2CP-1 / ATCC BAA-258</strain>
    </source>
</reference>
<name>Y4106_ANAD2</name>
<sequence length="197" mass="20252">MPQDAPAGLAPGFLVAAPALADPNFNGSLVLMAEHHAQGALGFVVNRPGPITVADVLGGLDAGLRERAEGAGRADDPVLVGGPVQPERLWILFRPGPAAPEEGAVALGAGLALGGSRELLEALVRARDPGPYLLLLGYAGWAPLQVEREVGEGAWVPLPLQGDLVFDVPMEKRWETAVRRLGLDPAGFLVGGGGAEA</sequence>
<accession>B8J9N6</accession>